<gene>
    <name evidence="1" type="primary">ispF</name>
    <name type="ordered locus">SF2769</name>
    <name type="ordered locus">S2962</name>
</gene>
<accession>P62619</accession>
<accession>P36663</accession>
<protein>
    <recommendedName>
        <fullName evidence="1">2-C-methyl-D-erythritol 2,4-cyclodiphosphate synthase</fullName>
        <shortName evidence="1">MECDP-synthase</shortName>
        <shortName evidence="1">MECPP-synthase</shortName>
        <shortName evidence="1">MECPS</shortName>
        <ecNumber evidence="1">4.6.1.12</ecNumber>
    </recommendedName>
</protein>
<comment type="function">
    <text evidence="1">Involved in the biosynthesis of isopentenyl diphosphate (IPP) and dimethylallyl diphosphate (DMAPP), two major building blocks of isoprenoid compounds. Catalyzes the conversion of 4-diphosphocytidyl-2-C-methyl-D-erythritol 2-phosphate (CDP-ME2P) to 2-C-methyl-D-erythritol 2,4-cyclodiphosphate (ME-CPP) with a corresponding release of cytidine 5-monophosphate (CMP).</text>
</comment>
<comment type="catalytic activity">
    <reaction evidence="1">
        <text>4-CDP-2-C-methyl-D-erythritol 2-phosphate = 2-C-methyl-D-erythritol 2,4-cyclic diphosphate + CMP</text>
        <dbReference type="Rhea" id="RHEA:23864"/>
        <dbReference type="ChEBI" id="CHEBI:57919"/>
        <dbReference type="ChEBI" id="CHEBI:58483"/>
        <dbReference type="ChEBI" id="CHEBI:60377"/>
        <dbReference type="EC" id="4.6.1.12"/>
    </reaction>
</comment>
<comment type="cofactor">
    <cofactor evidence="1">
        <name>a divalent metal cation</name>
        <dbReference type="ChEBI" id="CHEBI:60240"/>
    </cofactor>
    <text evidence="1">Binds 1 divalent metal cation per subunit.</text>
</comment>
<comment type="pathway">
    <text evidence="1">Isoprenoid biosynthesis; isopentenyl diphosphate biosynthesis via DXP pathway; isopentenyl diphosphate from 1-deoxy-D-xylulose 5-phosphate: step 4/6.</text>
</comment>
<comment type="subunit">
    <text evidence="1">Homotrimer.</text>
</comment>
<comment type="similarity">
    <text evidence="1">Belongs to the IspF family.</text>
</comment>
<name>ISPF_SHIFL</name>
<sequence length="159" mass="16898">MRIGHGFDVHAFGGEGPIIIGGVRIPYEKGLLAHSDGDVALHALTDALLGAAALGDIGKLFPDTDPAFKGADSRELLREAWRRIQAKGYTLGNVDVTIIAQAPKMLPHIPQMRVFIAEDLGCHMDDVNVKATTTEKLGFTGRGEGIACEAVALLIKATK</sequence>
<evidence type="ECO:0000255" key="1">
    <source>
        <dbReference type="HAMAP-Rule" id="MF_00107"/>
    </source>
</evidence>
<dbReference type="EC" id="4.6.1.12" evidence="1"/>
<dbReference type="EMBL" id="AE005674">
    <property type="protein sequence ID" value="AAN44258.1"/>
    <property type="molecule type" value="Genomic_DNA"/>
</dbReference>
<dbReference type="EMBL" id="AE014073">
    <property type="protein sequence ID" value="AAP18084.1"/>
    <property type="molecule type" value="Genomic_DNA"/>
</dbReference>
<dbReference type="RefSeq" id="NP_708551.1">
    <property type="nucleotide sequence ID" value="NC_004337.2"/>
</dbReference>
<dbReference type="RefSeq" id="WP_001219242.1">
    <property type="nucleotide sequence ID" value="NZ_WPGW01000039.1"/>
</dbReference>
<dbReference type="SMR" id="P62619"/>
<dbReference type="STRING" id="198214.SF2769"/>
<dbReference type="DrugBank" id="DB03961">
    <property type="generic name" value="2c-Methyl-D-Erythritol 2,4-Cyclodiphosphate"/>
</dbReference>
<dbReference type="DrugBank" id="DB03687">
    <property type="generic name" value="4-(Cytidine 5'-diphospho)-2-C-methyl-D-erythritol"/>
</dbReference>
<dbReference type="DrugBank" id="DB01859">
    <property type="generic name" value="4-CDP-2-C-methyl-D-erythritol 2-phosphate"/>
</dbReference>
<dbReference type="DrugBank" id="DB04555">
    <property type="generic name" value="Cytidine-5'-Diphosphate"/>
</dbReference>
<dbReference type="DrugBank" id="DB03403">
    <property type="generic name" value="Cytidine-5'-Monophosphate"/>
</dbReference>
<dbReference type="DrugBank" id="DB02552">
    <property type="generic name" value="Geranyl Diphosphate"/>
</dbReference>
<dbReference type="PaxDb" id="198214-SF2769"/>
<dbReference type="GeneID" id="1024297"/>
<dbReference type="GeneID" id="93779260"/>
<dbReference type="KEGG" id="sfl:SF2769"/>
<dbReference type="KEGG" id="sfx:S2962"/>
<dbReference type="PATRIC" id="fig|198214.7.peg.3296"/>
<dbReference type="HOGENOM" id="CLU_084630_2_0_6"/>
<dbReference type="UniPathway" id="UPA00056">
    <property type="reaction ID" value="UER00095"/>
</dbReference>
<dbReference type="Proteomes" id="UP000001006">
    <property type="component" value="Chromosome"/>
</dbReference>
<dbReference type="Proteomes" id="UP000002673">
    <property type="component" value="Chromosome"/>
</dbReference>
<dbReference type="GO" id="GO:0008685">
    <property type="term" value="F:2-C-methyl-D-erythritol 2,4-cyclodiphosphate synthase activity"/>
    <property type="evidence" value="ECO:0007669"/>
    <property type="project" value="UniProtKB-UniRule"/>
</dbReference>
<dbReference type="GO" id="GO:0046872">
    <property type="term" value="F:metal ion binding"/>
    <property type="evidence" value="ECO:0007669"/>
    <property type="project" value="UniProtKB-KW"/>
</dbReference>
<dbReference type="GO" id="GO:0019288">
    <property type="term" value="P:isopentenyl diphosphate biosynthetic process, methylerythritol 4-phosphate pathway"/>
    <property type="evidence" value="ECO:0007669"/>
    <property type="project" value="UniProtKB-UniRule"/>
</dbReference>
<dbReference type="GO" id="GO:0016114">
    <property type="term" value="P:terpenoid biosynthetic process"/>
    <property type="evidence" value="ECO:0007669"/>
    <property type="project" value="InterPro"/>
</dbReference>
<dbReference type="CDD" id="cd00554">
    <property type="entry name" value="MECDP_synthase"/>
    <property type="match status" value="1"/>
</dbReference>
<dbReference type="FunFam" id="3.30.1330.50:FF:000001">
    <property type="entry name" value="2-C-methyl-D-erythritol 2,4-cyclodiphosphate synthase"/>
    <property type="match status" value="1"/>
</dbReference>
<dbReference type="Gene3D" id="3.30.1330.50">
    <property type="entry name" value="2-C-methyl-D-erythritol 2,4-cyclodiphosphate synthase"/>
    <property type="match status" value="1"/>
</dbReference>
<dbReference type="HAMAP" id="MF_00107">
    <property type="entry name" value="IspF"/>
    <property type="match status" value="1"/>
</dbReference>
<dbReference type="InterPro" id="IPR003526">
    <property type="entry name" value="MECDP_synthase"/>
</dbReference>
<dbReference type="InterPro" id="IPR020555">
    <property type="entry name" value="MECDP_synthase_CS"/>
</dbReference>
<dbReference type="InterPro" id="IPR036571">
    <property type="entry name" value="MECDP_synthase_sf"/>
</dbReference>
<dbReference type="NCBIfam" id="TIGR00151">
    <property type="entry name" value="ispF"/>
    <property type="match status" value="1"/>
</dbReference>
<dbReference type="PANTHER" id="PTHR43181">
    <property type="entry name" value="2-C-METHYL-D-ERYTHRITOL 2,4-CYCLODIPHOSPHATE SYNTHASE, CHLOROPLASTIC"/>
    <property type="match status" value="1"/>
</dbReference>
<dbReference type="PANTHER" id="PTHR43181:SF1">
    <property type="entry name" value="2-C-METHYL-D-ERYTHRITOL 2,4-CYCLODIPHOSPHATE SYNTHASE, CHLOROPLASTIC"/>
    <property type="match status" value="1"/>
</dbReference>
<dbReference type="Pfam" id="PF02542">
    <property type="entry name" value="YgbB"/>
    <property type="match status" value="1"/>
</dbReference>
<dbReference type="SUPFAM" id="SSF69765">
    <property type="entry name" value="IpsF-like"/>
    <property type="match status" value="1"/>
</dbReference>
<dbReference type="PROSITE" id="PS01350">
    <property type="entry name" value="ISPF"/>
    <property type="match status" value="1"/>
</dbReference>
<proteinExistence type="inferred from homology"/>
<organism>
    <name type="scientific">Shigella flexneri</name>
    <dbReference type="NCBI Taxonomy" id="623"/>
    <lineage>
        <taxon>Bacteria</taxon>
        <taxon>Pseudomonadati</taxon>
        <taxon>Pseudomonadota</taxon>
        <taxon>Gammaproteobacteria</taxon>
        <taxon>Enterobacterales</taxon>
        <taxon>Enterobacteriaceae</taxon>
        <taxon>Shigella</taxon>
    </lineage>
</organism>
<keyword id="KW-0414">Isoprene biosynthesis</keyword>
<keyword id="KW-0456">Lyase</keyword>
<keyword id="KW-0479">Metal-binding</keyword>
<keyword id="KW-1185">Reference proteome</keyword>
<feature type="chain" id="PRO_0000189503" description="2-C-methyl-D-erythritol 2,4-cyclodiphosphate synthase">
    <location>
        <begin position="1"/>
        <end position="159"/>
    </location>
</feature>
<feature type="binding site" evidence="1">
    <location>
        <begin position="8"/>
        <end position="10"/>
    </location>
    <ligand>
        <name>4-CDP-2-C-methyl-D-erythritol 2-phosphate</name>
        <dbReference type="ChEBI" id="CHEBI:57919"/>
    </ligand>
</feature>
<feature type="binding site" evidence="1">
    <location>
        <position position="8"/>
    </location>
    <ligand>
        <name>a divalent metal cation</name>
        <dbReference type="ChEBI" id="CHEBI:60240"/>
    </ligand>
</feature>
<feature type="binding site" evidence="1">
    <location>
        <position position="10"/>
    </location>
    <ligand>
        <name>a divalent metal cation</name>
        <dbReference type="ChEBI" id="CHEBI:60240"/>
    </ligand>
</feature>
<feature type="binding site" evidence="1">
    <location>
        <begin position="34"/>
        <end position="35"/>
    </location>
    <ligand>
        <name>4-CDP-2-C-methyl-D-erythritol 2-phosphate</name>
        <dbReference type="ChEBI" id="CHEBI:57919"/>
    </ligand>
</feature>
<feature type="binding site" evidence="1">
    <location>
        <position position="42"/>
    </location>
    <ligand>
        <name>a divalent metal cation</name>
        <dbReference type="ChEBI" id="CHEBI:60240"/>
    </ligand>
</feature>
<feature type="binding site" evidence="1">
    <location>
        <begin position="56"/>
        <end position="58"/>
    </location>
    <ligand>
        <name>4-CDP-2-C-methyl-D-erythritol 2-phosphate</name>
        <dbReference type="ChEBI" id="CHEBI:57919"/>
    </ligand>
</feature>
<feature type="binding site" evidence="1">
    <location>
        <begin position="61"/>
        <end position="65"/>
    </location>
    <ligand>
        <name>4-CDP-2-C-methyl-D-erythritol 2-phosphate</name>
        <dbReference type="ChEBI" id="CHEBI:57919"/>
    </ligand>
</feature>
<feature type="binding site" evidence="1">
    <location>
        <begin position="100"/>
        <end position="106"/>
    </location>
    <ligand>
        <name>4-CDP-2-C-methyl-D-erythritol 2-phosphate</name>
        <dbReference type="ChEBI" id="CHEBI:57919"/>
    </ligand>
</feature>
<feature type="binding site" evidence="1">
    <location>
        <begin position="132"/>
        <end position="135"/>
    </location>
    <ligand>
        <name>4-CDP-2-C-methyl-D-erythritol 2-phosphate</name>
        <dbReference type="ChEBI" id="CHEBI:57919"/>
    </ligand>
</feature>
<feature type="binding site" evidence="1">
    <location>
        <position position="139"/>
    </location>
    <ligand>
        <name>4-CDP-2-C-methyl-D-erythritol 2-phosphate</name>
        <dbReference type="ChEBI" id="CHEBI:57919"/>
    </ligand>
</feature>
<feature type="binding site" evidence="1">
    <location>
        <position position="142"/>
    </location>
    <ligand>
        <name>4-CDP-2-C-methyl-D-erythritol 2-phosphate</name>
        <dbReference type="ChEBI" id="CHEBI:57919"/>
    </ligand>
</feature>
<feature type="site" description="Transition state stabilizer" evidence="1">
    <location>
        <position position="34"/>
    </location>
</feature>
<feature type="site" description="Transition state stabilizer" evidence="1">
    <location>
        <position position="133"/>
    </location>
</feature>
<reference key="1">
    <citation type="journal article" date="2002" name="Nucleic Acids Res.">
        <title>Genome sequence of Shigella flexneri 2a: insights into pathogenicity through comparison with genomes of Escherichia coli K12 and O157.</title>
        <authorList>
            <person name="Jin Q."/>
            <person name="Yuan Z."/>
            <person name="Xu J."/>
            <person name="Wang Y."/>
            <person name="Shen Y."/>
            <person name="Lu W."/>
            <person name="Wang J."/>
            <person name="Liu H."/>
            <person name="Yang J."/>
            <person name="Yang F."/>
            <person name="Zhang X."/>
            <person name="Zhang J."/>
            <person name="Yang G."/>
            <person name="Wu H."/>
            <person name="Qu D."/>
            <person name="Dong J."/>
            <person name="Sun L."/>
            <person name="Xue Y."/>
            <person name="Zhao A."/>
            <person name="Gao Y."/>
            <person name="Zhu J."/>
            <person name="Kan B."/>
            <person name="Ding K."/>
            <person name="Chen S."/>
            <person name="Cheng H."/>
            <person name="Yao Z."/>
            <person name="He B."/>
            <person name="Chen R."/>
            <person name="Ma D."/>
            <person name="Qiang B."/>
            <person name="Wen Y."/>
            <person name="Hou Y."/>
            <person name="Yu J."/>
        </authorList>
    </citation>
    <scope>NUCLEOTIDE SEQUENCE [LARGE SCALE GENOMIC DNA]</scope>
    <source>
        <strain>301 / Serotype 2a</strain>
    </source>
</reference>
<reference key="2">
    <citation type="journal article" date="2003" name="Infect. Immun.">
        <title>Complete genome sequence and comparative genomics of Shigella flexneri serotype 2a strain 2457T.</title>
        <authorList>
            <person name="Wei J."/>
            <person name="Goldberg M.B."/>
            <person name="Burland V."/>
            <person name="Venkatesan M.M."/>
            <person name="Deng W."/>
            <person name="Fournier G."/>
            <person name="Mayhew G.F."/>
            <person name="Plunkett G. III"/>
            <person name="Rose D.J."/>
            <person name="Darling A."/>
            <person name="Mau B."/>
            <person name="Perna N.T."/>
            <person name="Payne S.M."/>
            <person name="Runyen-Janecky L.J."/>
            <person name="Zhou S."/>
            <person name="Schwartz D.C."/>
            <person name="Blattner F.R."/>
        </authorList>
    </citation>
    <scope>NUCLEOTIDE SEQUENCE [LARGE SCALE GENOMIC DNA]</scope>
    <source>
        <strain>ATCC 700930 / 2457T / Serotype 2a</strain>
    </source>
</reference>